<feature type="chain" id="PRO_1000007265" description="Large ribosomal subunit protein bL28">
    <location>
        <begin position="1"/>
        <end position="61"/>
    </location>
</feature>
<feature type="region of interest" description="Disordered" evidence="2">
    <location>
        <begin position="1"/>
        <end position="26"/>
    </location>
</feature>
<organism>
    <name type="scientific">Ligilactobacillus salivarius (strain UCC118)</name>
    <name type="common">Lactobacillus salivarius</name>
    <dbReference type="NCBI Taxonomy" id="362948"/>
    <lineage>
        <taxon>Bacteria</taxon>
        <taxon>Bacillati</taxon>
        <taxon>Bacillota</taxon>
        <taxon>Bacilli</taxon>
        <taxon>Lactobacillales</taxon>
        <taxon>Lactobacillaceae</taxon>
        <taxon>Ligilactobacillus</taxon>
    </lineage>
</organism>
<keyword id="KW-1185">Reference proteome</keyword>
<keyword id="KW-0687">Ribonucleoprotein</keyword>
<keyword id="KW-0689">Ribosomal protein</keyword>
<evidence type="ECO:0000255" key="1">
    <source>
        <dbReference type="HAMAP-Rule" id="MF_00373"/>
    </source>
</evidence>
<evidence type="ECO:0000256" key="2">
    <source>
        <dbReference type="SAM" id="MobiDB-lite"/>
    </source>
</evidence>
<evidence type="ECO:0000305" key="3"/>
<protein>
    <recommendedName>
        <fullName evidence="1">Large ribosomal subunit protein bL28</fullName>
    </recommendedName>
    <alternativeName>
        <fullName evidence="3">50S ribosomal protein L28</fullName>
    </alternativeName>
</protein>
<reference key="1">
    <citation type="journal article" date="2006" name="Proc. Natl. Acad. Sci. U.S.A.">
        <title>Multireplicon genome architecture of Lactobacillus salivarius.</title>
        <authorList>
            <person name="Claesson M.J."/>
            <person name="Li Y."/>
            <person name="Leahy S."/>
            <person name="Canchaya C."/>
            <person name="van Pijkeren J.P."/>
            <person name="Cerdeno-Tarraga A.M."/>
            <person name="Parkhill J."/>
            <person name="Flynn S."/>
            <person name="O'Sullivan G.C."/>
            <person name="Collins J.K."/>
            <person name="Higgins D."/>
            <person name="Shanahan F."/>
            <person name="Fitzgerald G.F."/>
            <person name="van Sinderen D."/>
            <person name="O'Toole P.W."/>
        </authorList>
    </citation>
    <scope>NUCLEOTIDE SEQUENCE [LARGE SCALE GENOMIC DNA]</scope>
    <source>
        <strain>UCC118</strain>
    </source>
</reference>
<dbReference type="EMBL" id="CP000233">
    <property type="protein sequence ID" value="ABD99429.1"/>
    <property type="molecule type" value="Genomic_DNA"/>
</dbReference>
<dbReference type="RefSeq" id="WP_003694225.1">
    <property type="nucleotide sequence ID" value="NC_007929.1"/>
</dbReference>
<dbReference type="RefSeq" id="YP_535512.1">
    <property type="nucleotide sequence ID" value="NC_007929.1"/>
</dbReference>
<dbReference type="SMR" id="Q1WUA6"/>
<dbReference type="STRING" id="362948.LSL_0619"/>
<dbReference type="GeneID" id="89465411"/>
<dbReference type="KEGG" id="lsl:LSL_0619"/>
<dbReference type="PATRIC" id="fig|362948.14.peg.699"/>
<dbReference type="HOGENOM" id="CLU_064548_7_1_9"/>
<dbReference type="OrthoDB" id="9805609at2"/>
<dbReference type="Proteomes" id="UP000006559">
    <property type="component" value="Chromosome"/>
</dbReference>
<dbReference type="GO" id="GO:1990904">
    <property type="term" value="C:ribonucleoprotein complex"/>
    <property type="evidence" value="ECO:0007669"/>
    <property type="project" value="UniProtKB-KW"/>
</dbReference>
<dbReference type="GO" id="GO:0005840">
    <property type="term" value="C:ribosome"/>
    <property type="evidence" value="ECO:0007669"/>
    <property type="project" value="UniProtKB-KW"/>
</dbReference>
<dbReference type="GO" id="GO:0003735">
    <property type="term" value="F:structural constituent of ribosome"/>
    <property type="evidence" value="ECO:0007669"/>
    <property type="project" value="InterPro"/>
</dbReference>
<dbReference type="GO" id="GO:0006412">
    <property type="term" value="P:translation"/>
    <property type="evidence" value="ECO:0007669"/>
    <property type="project" value="UniProtKB-UniRule"/>
</dbReference>
<dbReference type="Gene3D" id="2.30.170.40">
    <property type="entry name" value="Ribosomal protein L28/L24"/>
    <property type="match status" value="1"/>
</dbReference>
<dbReference type="HAMAP" id="MF_00373">
    <property type="entry name" value="Ribosomal_bL28"/>
    <property type="match status" value="1"/>
</dbReference>
<dbReference type="InterPro" id="IPR050096">
    <property type="entry name" value="Bacterial_rp_bL28"/>
</dbReference>
<dbReference type="InterPro" id="IPR026569">
    <property type="entry name" value="Ribosomal_bL28"/>
</dbReference>
<dbReference type="InterPro" id="IPR034704">
    <property type="entry name" value="Ribosomal_bL28/bL31-like_sf"/>
</dbReference>
<dbReference type="InterPro" id="IPR001383">
    <property type="entry name" value="Ribosomal_bL28_bact-type"/>
</dbReference>
<dbReference type="InterPro" id="IPR037147">
    <property type="entry name" value="Ribosomal_bL28_sf"/>
</dbReference>
<dbReference type="NCBIfam" id="TIGR00009">
    <property type="entry name" value="L28"/>
    <property type="match status" value="1"/>
</dbReference>
<dbReference type="PANTHER" id="PTHR39080">
    <property type="entry name" value="50S RIBOSOMAL PROTEIN L28"/>
    <property type="match status" value="1"/>
</dbReference>
<dbReference type="PANTHER" id="PTHR39080:SF1">
    <property type="entry name" value="LARGE RIBOSOMAL SUBUNIT PROTEIN BL28A"/>
    <property type="match status" value="1"/>
</dbReference>
<dbReference type="Pfam" id="PF00830">
    <property type="entry name" value="Ribosomal_L28"/>
    <property type="match status" value="1"/>
</dbReference>
<dbReference type="SUPFAM" id="SSF143800">
    <property type="entry name" value="L28p-like"/>
    <property type="match status" value="1"/>
</dbReference>
<gene>
    <name evidence="1" type="primary">rpmB</name>
    <name type="ordered locus">LSL_0619</name>
</gene>
<name>RL28_LIGS1</name>
<accession>Q1WUA6</accession>
<sequence length="61" mass="6979">MAKDFVTGRKTTFGKKRSHALNQTNRSWKPNLQKVRILVDGKPKKVWVSTRALKSGKVTRV</sequence>
<comment type="similarity">
    <text evidence="1">Belongs to the bacterial ribosomal protein bL28 family.</text>
</comment>
<proteinExistence type="inferred from homology"/>